<gene>
    <name type="ordered locus">Sca_0984</name>
</gene>
<comment type="subcellular location">
    <subcellularLocation>
        <location evidence="1">Cell membrane</location>
        <topology evidence="1">Single-pass membrane protein</topology>
    </subcellularLocation>
</comment>
<comment type="similarity">
    <text evidence="1">Belongs to the UPF0154 family.</text>
</comment>
<keyword id="KW-1003">Cell membrane</keyword>
<keyword id="KW-0472">Membrane</keyword>
<keyword id="KW-1185">Reference proteome</keyword>
<keyword id="KW-0812">Transmembrane</keyword>
<keyword id="KW-1133">Transmembrane helix</keyword>
<evidence type="ECO:0000255" key="1">
    <source>
        <dbReference type="HAMAP-Rule" id="MF_00363"/>
    </source>
</evidence>
<dbReference type="EMBL" id="AM295250">
    <property type="protein sequence ID" value="CAL27892.1"/>
    <property type="molecule type" value="Genomic_DNA"/>
</dbReference>
<dbReference type="RefSeq" id="WP_015900233.1">
    <property type="nucleotide sequence ID" value="NC_012121.1"/>
</dbReference>
<dbReference type="SMR" id="B9DP73"/>
<dbReference type="KEGG" id="sca:SCA_0984"/>
<dbReference type="eggNOG" id="COG3763">
    <property type="taxonomic scope" value="Bacteria"/>
</dbReference>
<dbReference type="HOGENOM" id="CLU_180108_0_1_9"/>
<dbReference type="Proteomes" id="UP000000444">
    <property type="component" value="Chromosome"/>
</dbReference>
<dbReference type="GO" id="GO:0005886">
    <property type="term" value="C:plasma membrane"/>
    <property type="evidence" value="ECO:0007669"/>
    <property type="project" value="UniProtKB-SubCell"/>
</dbReference>
<dbReference type="Gene3D" id="1.10.238.10">
    <property type="entry name" value="EF-hand"/>
    <property type="match status" value="1"/>
</dbReference>
<dbReference type="HAMAP" id="MF_00363">
    <property type="entry name" value="UPF0154"/>
    <property type="match status" value="1"/>
</dbReference>
<dbReference type="InterPro" id="IPR011992">
    <property type="entry name" value="EF-hand-dom_pair"/>
</dbReference>
<dbReference type="InterPro" id="IPR005359">
    <property type="entry name" value="UPF0154"/>
</dbReference>
<dbReference type="Pfam" id="PF03672">
    <property type="entry name" value="UPF0154"/>
    <property type="match status" value="1"/>
</dbReference>
<dbReference type="SUPFAM" id="SSF47473">
    <property type="entry name" value="EF-hand"/>
    <property type="match status" value="1"/>
</dbReference>
<organism>
    <name type="scientific">Staphylococcus carnosus (strain TM300)</name>
    <dbReference type="NCBI Taxonomy" id="396513"/>
    <lineage>
        <taxon>Bacteria</taxon>
        <taxon>Bacillati</taxon>
        <taxon>Bacillota</taxon>
        <taxon>Bacilli</taxon>
        <taxon>Bacillales</taxon>
        <taxon>Staphylococcaceae</taxon>
        <taxon>Staphylococcus</taxon>
    </lineage>
</organism>
<reference key="1">
    <citation type="journal article" date="2009" name="Appl. Environ. Microbiol.">
        <title>Genome analysis of the meat starter culture bacterium Staphylococcus carnosus TM300.</title>
        <authorList>
            <person name="Rosenstein R."/>
            <person name="Nerz C."/>
            <person name="Biswas L."/>
            <person name="Resch A."/>
            <person name="Raddatz G."/>
            <person name="Schuster S.C."/>
            <person name="Goetz F."/>
        </authorList>
    </citation>
    <scope>NUCLEOTIDE SEQUENCE [LARGE SCALE GENOMIC DNA]</scope>
    <source>
        <strain>TM300</strain>
    </source>
</reference>
<accession>B9DP73</accession>
<name>Y984_STACT</name>
<feature type="chain" id="PRO_1000197728" description="UPF0154 protein Sca_0984">
    <location>
        <begin position="1"/>
        <end position="76"/>
    </location>
</feature>
<feature type="transmembrane region" description="Helical" evidence="1">
    <location>
        <begin position="4"/>
        <end position="24"/>
    </location>
</feature>
<protein>
    <recommendedName>
        <fullName evidence="1">UPF0154 protein Sca_0984</fullName>
    </recommendedName>
</protein>
<sequence>MATWLAILLIVAALIIGLVGGFFLARKYMMDYLKKNPPINEEMLRMMMMQMGQKPSQKKINQMMTMMNKNMDQKMK</sequence>
<proteinExistence type="inferred from homology"/>